<dbReference type="EMBL" id="L07352">
    <property type="protein sequence ID" value="AAA51505.1"/>
    <property type="molecule type" value="Genomic_RNA"/>
</dbReference>
<dbReference type="EMBL" id="CY007622">
    <property type="protein sequence ID" value="ABC46569.1"/>
    <property type="molecule type" value="Genomic_RNA"/>
</dbReference>
<dbReference type="SMR" id="Q08036"/>
<dbReference type="PRO" id="PR:Q08036"/>
<dbReference type="Proteomes" id="UP000008577">
    <property type="component" value="Genome"/>
</dbReference>
<dbReference type="GO" id="GO:0019029">
    <property type="term" value="C:helical viral capsid"/>
    <property type="evidence" value="ECO:0007669"/>
    <property type="project" value="UniProtKB-UniRule"/>
</dbReference>
<dbReference type="GO" id="GO:0043657">
    <property type="term" value="C:host cell"/>
    <property type="evidence" value="ECO:0007669"/>
    <property type="project" value="GOC"/>
</dbReference>
<dbReference type="GO" id="GO:0042025">
    <property type="term" value="C:host cell nucleus"/>
    <property type="evidence" value="ECO:0007669"/>
    <property type="project" value="UniProtKB-SubCell"/>
</dbReference>
<dbReference type="GO" id="GO:1990904">
    <property type="term" value="C:ribonucleoprotein complex"/>
    <property type="evidence" value="ECO:0007669"/>
    <property type="project" value="UniProtKB-KW"/>
</dbReference>
<dbReference type="GO" id="GO:0019013">
    <property type="term" value="C:viral nucleocapsid"/>
    <property type="evidence" value="ECO:0007669"/>
    <property type="project" value="UniProtKB-UniRule"/>
</dbReference>
<dbReference type="GO" id="GO:0003723">
    <property type="term" value="F:RNA binding"/>
    <property type="evidence" value="ECO:0007669"/>
    <property type="project" value="UniProtKB-UniRule"/>
</dbReference>
<dbReference type="GO" id="GO:0005198">
    <property type="term" value="F:structural molecule activity"/>
    <property type="evidence" value="ECO:0007669"/>
    <property type="project" value="UniProtKB-UniRule"/>
</dbReference>
<dbReference type="GO" id="GO:0046718">
    <property type="term" value="P:symbiont entry into host cell"/>
    <property type="evidence" value="ECO:0007669"/>
    <property type="project" value="UniProtKB-KW"/>
</dbReference>
<dbReference type="GO" id="GO:0075732">
    <property type="term" value="P:viral penetration into host nucleus"/>
    <property type="evidence" value="ECO:0007669"/>
    <property type="project" value="UniProtKB-UniRule"/>
</dbReference>
<dbReference type="HAMAP" id="MF_04070">
    <property type="entry name" value="INFV_NCAP"/>
    <property type="match status" value="1"/>
</dbReference>
<dbReference type="InterPro" id="IPR002141">
    <property type="entry name" value="Flu_NP"/>
</dbReference>
<dbReference type="Pfam" id="PF00506">
    <property type="entry name" value="Flu_NP"/>
    <property type="match status" value="1"/>
</dbReference>
<dbReference type="SUPFAM" id="SSF161003">
    <property type="entry name" value="flu NP-like"/>
    <property type="match status" value="1"/>
</dbReference>
<feature type="chain" id="PRO_0000079084" description="Nucleoprotein">
    <location>
        <begin position="1"/>
        <end position="498"/>
    </location>
</feature>
<feature type="region of interest" description="Disordered" evidence="2">
    <location>
        <begin position="1"/>
        <end position="21"/>
    </location>
</feature>
<feature type="short sequence motif" description="Unconventional nuclear localization signal" evidence="1">
    <location>
        <begin position="1"/>
        <end position="18"/>
    </location>
</feature>
<feature type="short sequence motif" description="Bipartite nuclear localization signal" evidence="1">
    <location>
        <begin position="198"/>
        <end position="216"/>
    </location>
</feature>
<feature type="compositionally biased region" description="Basic and acidic residues" evidence="2">
    <location>
        <begin position="8"/>
        <end position="21"/>
    </location>
</feature>
<feature type="sequence conflict" description="In Ref. 1; AAA51505." ref="1">
    <original>D</original>
    <variation>G</variation>
    <location>
        <position position="101"/>
    </location>
</feature>
<feature type="sequence conflict" description="In Ref. 1; AAA51505." ref="1">
    <original>A</original>
    <variation>R</variation>
    <location>
        <position position="131"/>
    </location>
</feature>
<gene>
    <name evidence="1" type="primary">NP</name>
</gene>
<comment type="function">
    <text evidence="1">Encapsidates the negative strand viral RNA, protecting it from nucleases. The encapsidated genomic RNA is termed the ribonucleoprotein (RNP) and serves as template for transcription and replication. The RNP needs to be localized in the host nucleus to start an infectious cycle, but is too large to diffuse through the nuclear pore complex. NP comprises at least 2 nuclear localization signals that are responsible for the active RNP import into the nucleus through cellular importin alpha/beta pathway. Later in the infection, nclear export of RNPs are mediated through viral proteins NEP interacting with M1 which binds nucleoproteins. It is possible that nucleoprotein binds directly host exportin-1/XPO1 and plays an active role in RNPs nuclear export. M1 interaction with RNP seems to hide nucleoprotein's nuclear localization signals. Soon after a virion infects a new cell, M1 dissociates from the RNP under acidification of the virion driven by M2 protein. Dissociation of M1 from RNP unmasks nucleoprotein's nuclear localization signals, targeting the RNP to the nucleus.</text>
</comment>
<comment type="subunit">
    <text evidence="1">Homomultimerizes to form the nucleocapsid. May bind host exportin-1/XPO1. Binds to viral genomic RNA. Protein-RNA contacts are mediated by a combination of electrostatic interactions between positively charged residues and the phosphate backbone and planar interactions between aromatic side chains and bases.</text>
</comment>
<comment type="subcellular location">
    <subcellularLocation>
        <location evidence="1">Virion</location>
    </subcellularLocation>
    <subcellularLocation>
        <location evidence="1">Host nucleus</location>
    </subcellularLocation>
</comment>
<comment type="PTM">
    <text evidence="1">Late in virus-infected cells, may be cleaved from a 56-kDa protein to a 53-kDa protein by a cellular caspase. This cleavage might be a marker for the onset of apoptosis in infected cells or have a specific function in virus host interaction.</text>
</comment>
<comment type="similarity">
    <text evidence="1">Belongs to the influenza viruses nucleoprotein family.</text>
</comment>
<accession>Q08036</accession>
<accession>Q2RCH2</accession>
<organism>
    <name type="scientific">Influenza A virus (strain A/Memphis/4/1980 H3N2)</name>
    <dbReference type="NCBI Taxonomy" id="383578"/>
    <lineage>
        <taxon>Viruses</taxon>
        <taxon>Riboviria</taxon>
        <taxon>Orthornavirae</taxon>
        <taxon>Negarnaviricota</taxon>
        <taxon>Polyploviricotina</taxon>
        <taxon>Insthoviricetes</taxon>
        <taxon>Articulavirales</taxon>
        <taxon>Orthomyxoviridae</taxon>
        <taxon>Alphainfluenzavirus</taxon>
        <taxon>Alphainfluenzavirus influenzae</taxon>
        <taxon>Influenza A virus</taxon>
    </lineage>
</organism>
<name>NCAP_I80A4</name>
<reference key="1">
    <citation type="journal article" date="1993" name="J. Virol.">
        <title>Analysis of the evolution and variation of the human influenza A virus nucleoprotein gene from 1933 to 1990.</title>
        <authorList>
            <person name="Shu L.L."/>
            <person name="Bean W.J."/>
            <person name="Webster R.G."/>
        </authorList>
    </citation>
    <scope>NUCLEOTIDE SEQUENCE [GENOMIC RNA]</scope>
</reference>
<reference key="2">
    <citation type="submission" date="2005-12" db="EMBL/GenBank/DDBJ databases">
        <title>The NIAID influenza genome sequencing project.</title>
        <authorList>
            <person name="Ghedin E."/>
            <person name="Spiro D."/>
            <person name="Miller N."/>
            <person name="Zaborsky J."/>
            <person name="Feldblyum T."/>
            <person name="Subbu V."/>
            <person name="Shumway M."/>
            <person name="Sparenborg J."/>
            <person name="Groveman L."/>
            <person name="Halpin R."/>
            <person name="Sitz J."/>
            <person name="Koo H."/>
            <person name="Salzberg S.L."/>
            <person name="Webster R.G."/>
            <person name="Hoffmann E."/>
            <person name="Krauss S."/>
            <person name="Naeve C."/>
            <person name="Bao Y."/>
            <person name="Bolotov P."/>
            <person name="Dernovoy D."/>
            <person name="Kiryutin B."/>
            <person name="Lipman D.J."/>
            <person name="Tatusova T."/>
        </authorList>
    </citation>
    <scope>NUCLEOTIDE SEQUENCE [GENOMIC RNA]</scope>
</reference>
<keyword id="KW-0167">Capsid protein</keyword>
<keyword id="KW-1139">Helical capsid protein</keyword>
<keyword id="KW-1048">Host nucleus</keyword>
<keyword id="KW-0945">Host-virus interaction</keyword>
<keyword id="KW-0687">Ribonucleoprotein</keyword>
<keyword id="KW-0694">RNA-binding</keyword>
<keyword id="KW-0543">Viral nucleoprotein</keyword>
<keyword id="KW-1163">Viral penetration into host nucleus</keyword>
<keyword id="KW-0946">Virion</keyword>
<keyword id="KW-1160">Virus entry into host cell</keyword>
<proteinExistence type="inferred from homology"/>
<organismHost>
    <name type="scientific">Aves</name>
    <dbReference type="NCBI Taxonomy" id="8782"/>
</organismHost>
<organismHost>
    <name type="scientific">Cetacea</name>
    <name type="common">whales</name>
    <dbReference type="NCBI Taxonomy" id="9721"/>
</organismHost>
<organismHost>
    <name type="scientific">Homo sapiens</name>
    <name type="common">Human</name>
    <dbReference type="NCBI Taxonomy" id="9606"/>
</organismHost>
<organismHost>
    <name type="scientific">Phocidae</name>
    <name type="common">true seals</name>
    <dbReference type="NCBI Taxonomy" id="9709"/>
</organismHost>
<organismHost>
    <name type="scientific">Sus scrofa</name>
    <name type="common">Pig</name>
    <dbReference type="NCBI Taxonomy" id="9823"/>
</organismHost>
<evidence type="ECO:0000255" key="1">
    <source>
        <dbReference type="HAMAP-Rule" id="MF_04070"/>
    </source>
</evidence>
<evidence type="ECO:0000256" key="2">
    <source>
        <dbReference type="SAM" id="MobiDB-lite"/>
    </source>
</evidence>
<sequence>MASQGTKRSYEQMETDGERQNATEIRASVGKMIDGIGRFYIQMCTELKLSDYEGRLIQNSLTIERMVLSAFDERRNRYLEEHPSAGKDPKKTGGPIYKRVDGKWMRELVLYDKEEIRRIWRQANNGDDATAGLTHMMIWHSNLNDTTYQRTRALVRTGMDPRMCSLMQGSTLPRRSGAAGAAVKGIGTMVMELIRMIKRGINDRNFWRGENGRKTRSAYERMCNILKGKFQTAAQRAMMDQVRESRNPGNAEIEDLIFSARSALILRGSVAHKSCLPACVYGPAVSSGYDFEKEGYSLVGIDPFKLLQNSQVYSLIRPNENPAHKSQLVWMACHSAAFEDLRLLSFIRGTKVSPRGKLSTRGVQIASNENMDNMESSTLELRSRYWAIRTRSGGNTNQQRASAGQISVQPTFSVQRNLPFEKSTVMAAFTGNTEGRTSDMRAEIIRMMEGAKPEEVSFRGRGVFELSDEKATNPIVPSFDMSNEGSYFFGDNAEDYDN</sequence>
<protein>
    <recommendedName>
        <fullName evidence="1">Nucleoprotein</fullName>
    </recommendedName>
    <alternativeName>
        <fullName evidence="1">Nucleocapsid protein</fullName>
        <shortName evidence="1">Protein N</shortName>
    </alternativeName>
</protein>